<comment type="function">
    <text evidence="1">Involved in the biosynthesis of ADP-glucose, a building block required for the elongation reactions to produce glycogen. Catalyzes the reaction between ATP and alpha-D-glucose 1-phosphate (G1P) to produce pyrophosphate and ADP-Glc.</text>
</comment>
<comment type="catalytic activity">
    <reaction evidence="1">
        <text>alpha-D-glucose 1-phosphate + ATP + H(+) = ADP-alpha-D-glucose + diphosphate</text>
        <dbReference type="Rhea" id="RHEA:12120"/>
        <dbReference type="ChEBI" id="CHEBI:15378"/>
        <dbReference type="ChEBI" id="CHEBI:30616"/>
        <dbReference type="ChEBI" id="CHEBI:33019"/>
        <dbReference type="ChEBI" id="CHEBI:57498"/>
        <dbReference type="ChEBI" id="CHEBI:58601"/>
        <dbReference type="EC" id="2.7.7.27"/>
    </reaction>
</comment>
<comment type="pathway">
    <text evidence="1">Glycan biosynthesis; glycogen biosynthesis.</text>
</comment>
<comment type="subunit">
    <text evidence="1">Homotetramer.</text>
</comment>
<comment type="similarity">
    <text evidence="1">Belongs to the bacterial/plant glucose-1-phosphate adenylyltransferase family.</text>
</comment>
<feature type="chain" id="PRO_0000195317" description="Glucose-1-phosphate adenylyltransferase">
    <location>
        <begin position="1"/>
        <end position="421"/>
    </location>
</feature>
<feature type="binding site" evidence="1">
    <location>
        <position position="108"/>
    </location>
    <ligand>
        <name>alpha-D-glucose 1-phosphate</name>
        <dbReference type="ChEBI" id="CHEBI:58601"/>
    </ligand>
</feature>
<feature type="binding site" evidence="1">
    <location>
        <position position="173"/>
    </location>
    <ligand>
        <name>alpha-D-glucose 1-phosphate</name>
        <dbReference type="ChEBI" id="CHEBI:58601"/>
    </ligand>
</feature>
<feature type="binding site" evidence="1">
    <location>
        <begin position="188"/>
        <end position="189"/>
    </location>
    <ligand>
        <name>alpha-D-glucose 1-phosphate</name>
        <dbReference type="ChEBI" id="CHEBI:58601"/>
    </ligand>
</feature>
<feature type="binding site" evidence="1">
    <location>
        <position position="206"/>
    </location>
    <ligand>
        <name>alpha-D-glucose 1-phosphate</name>
        <dbReference type="ChEBI" id="CHEBI:58601"/>
    </ligand>
</feature>
<feature type="sequence conflict" description="In Ref. 1; AAK58595." evidence="2" ref="1">
    <original>M</original>
    <variation>L</variation>
    <location>
        <position position="145"/>
    </location>
</feature>
<feature type="sequence conflict" description="In Ref. 1; AAK58595." evidence="2" ref="1">
    <original>N</original>
    <variation>G</variation>
    <location>
        <position position="154"/>
    </location>
</feature>
<feature type="sequence conflict" description="In Ref. 1; AAK58595." evidence="2" ref="1">
    <original>D</original>
    <variation>E</variation>
    <location>
        <position position="201"/>
    </location>
</feature>
<feature type="sequence conflict" description="In Ref. 1; AAK58595." evidence="2" ref="1">
    <original>E</original>
    <variation>D</variation>
    <location>
        <position position="227"/>
    </location>
</feature>
<feature type="sequence conflict" description="In Ref. 1; AAK58595." evidence="2" ref="1">
    <original>A</original>
    <variation>M</variation>
    <location>
        <position position="262"/>
    </location>
</feature>
<feature type="sequence conflict" description="In Ref. 1; AAK58595." evidence="2" ref="1">
    <original>I</original>
    <variation>V</variation>
    <location>
        <position position="287"/>
    </location>
</feature>
<feature type="sequence conflict" description="In Ref. 1; AAK58595." evidence="2" ref="1">
    <original>T</original>
    <variation>S</variation>
    <location>
        <position position="338"/>
    </location>
</feature>
<feature type="sequence conflict" description="In Ref. 1; AAK58595." evidence="2" ref="1">
    <original>T</original>
    <variation>A</variation>
    <location>
        <position position="355"/>
    </location>
</feature>
<feature type="sequence conflict" description="In Ref. 1; AAK58595." evidence="2" ref="1">
    <original>A</original>
    <variation>V</variation>
    <location>
        <position position="395"/>
    </location>
</feature>
<feature type="sequence conflict" description="In Ref. 1; AAK58595." evidence="2" ref="1">
    <original>I</original>
    <variation>V</variation>
    <location>
        <position position="411"/>
    </location>
</feature>
<sequence>MADLKRTQPLARDAMAYVLAGGRGSRLKELTDRRAKPAVYFGGKTRIIDFALSNALNSGIRRLGVATQYKAHSLIRHLQRGWNFLRPERNESFDILPASQRVSETQWYEGTADAVYQNIDIIEAYGPEYMVILAGDHIYKMDYEMMLRQHVDANADVTVGCLEVPRMEATGFGVMHVDAKDNIIAFVEKPADPPGIPGNPDFALASMGIYVFKTKFLMEQLRRDAAEPGSSRDFGKDIIPYIVQHGKAIAHRFTKSCVRSTAENEAYWRDVGTVDAYWEANIDLTDITPELDLYDRDWPIWTYAELKPPAKFVHDEDGRRGSAVSSLVSGDCIVSGATLKKSLIFTGARINSYSTLEEVVMLPDVHVGRNAKLKRVVIDHGVRIPEGLVVGEDPALDAKRFRVSEKGICLITQDMINKLGL</sequence>
<evidence type="ECO:0000255" key="1">
    <source>
        <dbReference type="HAMAP-Rule" id="MF_00624"/>
    </source>
</evidence>
<evidence type="ECO:0000305" key="2"/>
<keyword id="KW-0067">ATP-binding</keyword>
<keyword id="KW-0119">Carbohydrate metabolism</keyword>
<keyword id="KW-0320">Glycogen biosynthesis</keyword>
<keyword id="KW-0321">Glycogen metabolism</keyword>
<keyword id="KW-0547">Nucleotide-binding</keyword>
<keyword id="KW-0548">Nucleotidyltransferase</keyword>
<keyword id="KW-0808">Transferase</keyword>
<dbReference type="EC" id="2.7.7.27" evidence="1"/>
<dbReference type="EMBL" id="AF268969">
    <property type="protein sequence ID" value="AAK58595.1"/>
    <property type="molecule type" value="Genomic_DNA"/>
</dbReference>
<dbReference type="EMBL" id="BA000012">
    <property type="protein sequence ID" value="BAB54019.1"/>
    <property type="molecule type" value="Genomic_DNA"/>
</dbReference>
<dbReference type="RefSeq" id="WP_010914967.1">
    <property type="nucleotide sequence ID" value="NC_002678.2"/>
</dbReference>
<dbReference type="SMR" id="Q985P3"/>
<dbReference type="GeneID" id="66685156"/>
<dbReference type="KEGG" id="mlo:mlr7588"/>
<dbReference type="eggNOG" id="COG0448">
    <property type="taxonomic scope" value="Bacteria"/>
</dbReference>
<dbReference type="HOGENOM" id="CLU_029499_14_1_5"/>
<dbReference type="UniPathway" id="UPA00164"/>
<dbReference type="Proteomes" id="UP000000552">
    <property type="component" value="Chromosome"/>
</dbReference>
<dbReference type="GO" id="GO:0005524">
    <property type="term" value="F:ATP binding"/>
    <property type="evidence" value="ECO:0007669"/>
    <property type="project" value="UniProtKB-KW"/>
</dbReference>
<dbReference type="GO" id="GO:0008878">
    <property type="term" value="F:glucose-1-phosphate adenylyltransferase activity"/>
    <property type="evidence" value="ECO:0007669"/>
    <property type="project" value="UniProtKB-UniRule"/>
</dbReference>
<dbReference type="GO" id="GO:0005978">
    <property type="term" value="P:glycogen biosynthetic process"/>
    <property type="evidence" value="ECO:0007669"/>
    <property type="project" value="UniProtKB-UniRule"/>
</dbReference>
<dbReference type="CDD" id="cd02508">
    <property type="entry name" value="ADP_Glucose_PP"/>
    <property type="match status" value="1"/>
</dbReference>
<dbReference type="CDD" id="cd04651">
    <property type="entry name" value="LbH_G1P_AT_C"/>
    <property type="match status" value="1"/>
</dbReference>
<dbReference type="Gene3D" id="2.160.10.10">
    <property type="entry name" value="Hexapeptide repeat proteins"/>
    <property type="match status" value="1"/>
</dbReference>
<dbReference type="Gene3D" id="3.90.550.10">
    <property type="entry name" value="Spore Coat Polysaccharide Biosynthesis Protein SpsA, Chain A"/>
    <property type="match status" value="1"/>
</dbReference>
<dbReference type="HAMAP" id="MF_00624">
    <property type="entry name" value="GlgC"/>
    <property type="match status" value="1"/>
</dbReference>
<dbReference type="InterPro" id="IPR011831">
    <property type="entry name" value="ADP-Glc_PPase"/>
</dbReference>
<dbReference type="InterPro" id="IPR005836">
    <property type="entry name" value="ADP_Glu_pyroP_CS"/>
</dbReference>
<dbReference type="InterPro" id="IPR023049">
    <property type="entry name" value="GlgC_bac"/>
</dbReference>
<dbReference type="InterPro" id="IPR056818">
    <property type="entry name" value="GlmU/GlgC-like_hexapep"/>
</dbReference>
<dbReference type="InterPro" id="IPR005835">
    <property type="entry name" value="NTP_transferase_dom"/>
</dbReference>
<dbReference type="InterPro" id="IPR029044">
    <property type="entry name" value="Nucleotide-diphossugar_trans"/>
</dbReference>
<dbReference type="InterPro" id="IPR011004">
    <property type="entry name" value="Trimer_LpxA-like_sf"/>
</dbReference>
<dbReference type="NCBIfam" id="TIGR02091">
    <property type="entry name" value="glgC"/>
    <property type="match status" value="1"/>
</dbReference>
<dbReference type="NCBIfam" id="NF001947">
    <property type="entry name" value="PRK00725.1"/>
    <property type="match status" value="1"/>
</dbReference>
<dbReference type="NCBIfam" id="NF002023">
    <property type="entry name" value="PRK00844.1"/>
    <property type="match status" value="1"/>
</dbReference>
<dbReference type="PANTHER" id="PTHR43523:SF2">
    <property type="entry name" value="GLUCOSE-1-PHOSPHATE ADENYLYLTRANSFERASE"/>
    <property type="match status" value="1"/>
</dbReference>
<dbReference type="PANTHER" id="PTHR43523">
    <property type="entry name" value="GLUCOSE-1-PHOSPHATE ADENYLYLTRANSFERASE-RELATED"/>
    <property type="match status" value="1"/>
</dbReference>
<dbReference type="Pfam" id="PF24894">
    <property type="entry name" value="Hexapep_GlmU"/>
    <property type="match status" value="1"/>
</dbReference>
<dbReference type="Pfam" id="PF00483">
    <property type="entry name" value="NTP_transferase"/>
    <property type="match status" value="1"/>
</dbReference>
<dbReference type="SUPFAM" id="SSF53448">
    <property type="entry name" value="Nucleotide-diphospho-sugar transferases"/>
    <property type="match status" value="1"/>
</dbReference>
<dbReference type="SUPFAM" id="SSF51161">
    <property type="entry name" value="Trimeric LpxA-like enzymes"/>
    <property type="match status" value="1"/>
</dbReference>
<dbReference type="PROSITE" id="PS00808">
    <property type="entry name" value="ADP_GLC_PYROPHOSPH_1"/>
    <property type="match status" value="1"/>
</dbReference>
<dbReference type="PROSITE" id="PS00809">
    <property type="entry name" value="ADP_GLC_PYROPHOSPH_2"/>
    <property type="match status" value="1"/>
</dbReference>
<dbReference type="PROSITE" id="PS00810">
    <property type="entry name" value="ADP_GLC_PYROPHOSPH_3"/>
    <property type="match status" value="1"/>
</dbReference>
<organism>
    <name type="scientific">Mesorhizobium japonicum (strain LMG 29417 / CECT 9101 / MAFF 303099)</name>
    <name type="common">Mesorhizobium loti (strain MAFF 303099)</name>
    <dbReference type="NCBI Taxonomy" id="266835"/>
    <lineage>
        <taxon>Bacteria</taxon>
        <taxon>Pseudomonadati</taxon>
        <taxon>Pseudomonadota</taxon>
        <taxon>Alphaproteobacteria</taxon>
        <taxon>Hyphomicrobiales</taxon>
        <taxon>Phyllobacteriaceae</taxon>
        <taxon>Mesorhizobium</taxon>
    </lineage>
</organism>
<gene>
    <name evidence="1" type="primary">glgC</name>
    <name type="ordered locus">mlr7588</name>
</gene>
<proteinExistence type="inferred from homology"/>
<accession>Q985P3</accession>
<accession>Q93QE7</accession>
<protein>
    <recommendedName>
        <fullName evidence="1">Glucose-1-phosphate adenylyltransferase</fullName>
        <ecNumber evidence="1">2.7.7.27</ecNumber>
    </recommendedName>
    <alternativeName>
        <fullName evidence="1">ADP-glucose pyrophosphorylase</fullName>
        <shortName evidence="1">ADPGlc PPase</shortName>
    </alternativeName>
    <alternativeName>
        <fullName evidence="1">ADP-glucose synthase</fullName>
    </alternativeName>
</protein>
<name>GLGC_RHILO</name>
<reference key="1">
    <citation type="submission" date="2000-05" db="EMBL/GenBank/DDBJ databases">
        <title>Partial characterization of R.loti gene cluster for glycogen metabolism: differences with A.tumefaciens.</title>
        <authorList>
            <person name="Lepek V.C."/>
            <person name="Tomatis P.E."/>
            <person name="Giambiagi S."/>
            <person name="Ugalde R.A."/>
        </authorList>
    </citation>
    <scope>NUCLEOTIDE SEQUENCE [GENOMIC DNA]</scope>
</reference>
<reference key="2">
    <citation type="journal article" date="2000" name="DNA Res.">
        <title>Complete genome structure of the nitrogen-fixing symbiotic bacterium Mesorhizobium loti.</title>
        <authorList>
            <person name="Kaneko T."/>
            <person name="Nakamura Y."/>
            <person name="Sato S."/>
            <person name="Asamizu E."/>
            <person name="Kato T."/>
            <person name="Sasamoto S."/>
            <person name="Watanabe A."/>
            <person name="Idesawa K."/>
            <person name="Ishikawa A."/>
            <person name="Kawashima K."/>
            <person name="Kimura T."/>
            <person name="Kishida Y."/>
            <person name="Kiyokawa C."/>
            <person name="Kohara M."/>
            <person name="Matsumoto M."/>
            <person name="Matsuno A."/>
            <person name="Mochizuki Y."/>
            <person name="Nakayama S."/>
            <person name="Nakazaki N."/>
            <person name="Shimpo S."/>
            <person name="Sugimoto M."/>
            <person name="Takeuchi C."/>
            <person name="Yamada M."/>
            <person name="Tabata S."/>
        </authorList>
    </citation>
    <scope>NUCLEOTIDE SEQUENCE [LARGE SCALE GENOMIC DNA]</scope>
    <source>
        <strain>LMG 29417 / CECT 9101 / MAFF 303099</strain>
    </source>
</reference>